<proteinExistence type="inferred from homology"/>
<name>HLDE_ECO57</name>
<reference key="1">
    <citation type="journal article" date="2001" name="Nature">
        <title>Genome sequence of enterohaemorrhagic Escherichia coli O157:H7.</title>
        <authorList>
            <person name="Perna N.T."/>
            <person name="Plunkett G. III"/>
            <person name="Burland V."/>
            <person name="Mau B."/>
            <person name="Glasner J.D."/>
            <person name="Rose D.J."/>
            <person name="Mayhew G.F."/>
            <person name="Evans P.S."/>
            <person name="Gregor J."/>
            <person name="Kirkpatrick H.A."/>
            <person name="Posfai G."/>
            <person name="Hackett J."/>
            <person name="Klink S."/>
            <person name="Boutin A."/>
            <person name="Shao Y."/>
            <person name="Miller L."/>
            <person name="Grotbeck E.J."/>
            <person name="Davis N.W."/>
            <person name="Lim A."/>
            <person name="Dimalanta E.T."/>
            <person name="Potamousis K."/>
            <person name="Apodaca J."/>
            <person name="Anantharaman T.S."/>
            <person name="Lin J."/>
            <person name="Yen G."/>
            <person name="Schwartz D.C."/>
            <person name="Welch R.A."/>
            <person name="Blattner F.R."/>
        </authorList>
    </citation>
    <scope>NUCLEOTIDE SEQUENCE [LARGE SCALE GENOMIC DNA]</scope>
    <source>
        <strain>O157:H7 / EDL933 / ATCC 700927 / EHEC</strain>
    </source>
</reference>
<reference key="2">
    <citation type="journal article" date="2001" name="DNA Res.">
        <title>Complete genome sequence of enterohemorrhagic Escherichia coli O157:H7 and genomic comparison with a laboratory strain K-12.</title>
        <authorList>
            <person name="Hayashi T."/>
            <person name="Makino K."/>
            <person name="Ohnishi M."/>
            <person name="Kurokawa K."/>
            <person name="Ishii K."/>
            <person name="Yokoyama K."/>
            <person name="Han C.-G."/>
            <person name="Ohtsubo E."/>
            <person name="Nakayama K."/>
            <person name="Murata T."/>
            <person name="Tanaka M."/>
            <person name="Tobe T."/>
            <person name="Iida T."/>
            <person name="Takami H."/>
            <person name="Honda T."/>
            <person name="Sasakawa C."/>
            <person name="Ogasawara N."/>
            <person name="Yasunaga T."/>
            <person name="Kuhara S."/>
            <person name="Shiba T."/>
            <person name="Hattori M."/>
            <person name="Shinagawa H."/>
        </authorList>
    </citation>
    <scope>NUCLEOTIDE SEQUENCE [LARGE SCALE GENOMIC DNA]</scope>
    <source>
        <strain>O157:H7 / Sakai / RIMD 0509952 / EHEC</strain>
    </source>
</reference>
<dbReference type="EC" id="2.7.1.167" evidence="1"/>
<dbReference type="EC" id="2.7.7.70" evidence="1"/>
<dbReference type="EMBL" id="AE005174">
    <property type="protein sequence ID" value="AAG58186.1"/>
    <property type="molecule type" value="Genomic_DNA"/>
</dbReference>
<dbReference type="EMBL" id="BA000007">
    <property type="protein sequence ID" value="BAB37358.1"/>
    <property type="molecule type" value="Genomic_DNA"/>
</dbReference>
<dbReference type="PIR" id="F85965">
    <property type="entry name" value="F85965"/>
</dbReference>
<dbReference type="PIR" id="G91120">
    <property type="entry name" value="G91120"/>
</dbReference>
<dbReference type="RefSeq" id="NP_311962.1">
    <property type="nucleotide sequence ID" value="NC_002695.1"/>
</dbReference>
<dbReference type="RefSeq" id="WP_000869160.1">
    <property type="nucleotide sequence ID" value="NZ_VOAI01000009.1"/>
</dbReference>
<dbReference type="SMR" id="Q7AAQ7"/>
<dbReference type="STRING" id="155864.Z4405"/>
<dbReference type="GeneID" id="916240"/>
<dbReference type="KEGG" id="ece:Z4405"/>
<dbReference type="KEGG" id="ecs:ECs_3935"/>
<dbReference type="PATRIC" id="fig|386585.9.peg.4103"/>
<dbReference type="eggNOG" id="COG0615">
    <property type="taxonomic scope" value="Bacteria"/>
</dbReference>
<dbReference type="eggNOG" id="COG2870">
    <property type="taxonomic scope" value="Bacteria"/>
</dbReference>
<dbReference type="HOGENOM" id="CLU_021150_2_1_6"/>
<dbReference type="OMA" id="ILNQTHP"/>
<dbReference type="UniPathway" id="UPA00356">
    <property type="reaction ID" value="UER00437"/>
</dbReference>
<dbReference type="UniPathway" id="UPA00356">
    <property type="reaction ID" value="UER00439"/>
</dbReference>
<dbReference type="UniPathway" id="UPA00958"/>
<dbReference type="Proteomes" id="UP000000558">
    <property type="component" value="Chromosome"/>
</dbReference>
<dbReference type="Proteomes" id="UP000002519">
    <property type="component" value="Chromosome"/>
</dbReference>
<dbReference type="GO" id="GO:0005829">
    <property type="term" value="C:cytosol"/>
    <property type="evidence" value="ECO:0007669"/>
    <property type="project" value="TreeGrafter"/>
</dbReference>
<dbReference type="GO" id="GO:0005524">
    <property type="term" value="F:ATP binding"/>
    <property type="evidence" value="ECO:0007669"/>
    <property type="project" value="UniProtKB-UniRule"/>
</dbReference>
<dbReference type="GO" id="GO:0033785">
    <property type="term" value="F:heptose 7-phosphate kinase activity"/>
    <property type="evidence" value="ECO:0007669"/>
    <property type="project" value="UniProtKB-UniRule"/>
</dbReference>
<dbReference type="GO" id="GO:0033786">
    <property type="term" value="F:heptose-1-phosphate adenylyltransferase activity"/>
    <property type="evidence" value="ECO:0007669"/>
    <property type="project" value="UniProtKB-UniRule"/>
</dbReference>
<dbReference type="GO" id="GO:0016773">
    <property type="term" value="F:phosphotransferase activity, alcohol group as acceptor"/>
    <property type="evidence" value="ECO:0007669"/>
    <property type="project" value="InterPro"/>
</dbReference>
<dbReference type="GO" id="GO:0097171">
    <property type="term" value="P:ADP-L-glycero-beta-D-manno-heptose biosynthetic process"/>
    <property type="evidence" value="ECO:0007669"/>
    <property type="project" value="UniProtKB-UniPathway"/>
</dbReference>
<dbReference type="GO" id="GO:0009244">
    <property type="term" value="P:lipopolysaccharide core region biosynthetic process"/>
    <property type="evidence" value="ECO:0007669"/>
    <property type="project" value="UniProtKB-UniPathway"/>
</dbReference>
<dbReference type="CDD" id="cd01172">
    <property type="entry name" value="RfaE_like"/>
    <property type="match status" value="1"/>
</dbReference>
<dbReference type="FunFam" id="3.40.1190.20:FF:000002">
    <property type="entry name" value="Bifunctional protein HldE"/>
    <property type="match status" value="1"/>
</dbReference>
<dbReference type="FunFam" id="3.40.50.620:FF:000028">
    <property type="entry name" value="Bifunctional protein HldE"/>
    <property type="match status" value="1"/>
</dbReference>
<dbReference type="Gene3D" id="3.40.1190.20">
    <property type="match status" value="1"/>
</dbReference>
<dbReference type="Gene3D" id="3.40.50.620">
    <property type="entry name" value="HUPs"/>
    <property type="match status" value="1"/>
</dbReference>
<dbReference type="HAMAP" id="MF_01603">
    <property type="entry name" value="HldE"/>
    <property type="match status" value="1"/>
</dbReference>
<dbReference type="InterPro" id="IPR023030">
    <property type="entry name" value="Bifunc_HldE"/>
</dbReference>
<dbReference type="InterPro" id="IPR002173">
    <property type="entry name" value="Carboh/pur_kinase_PfkB_CS"/>
</dbReference>
<dbReference type="InterPro" id="IPR004821">
    <property type="entry name" value="Cyt_trans-like"/>
</dbReference>
<dbReference type="InterPro" id="IPR011611">
    <property type="entry name" value="PfkB_dom"/>
</dbReference>
<dbReference type="InterPro" id="IPR011913">
    <property type="entry name" value="RfaE_dom_I"/>
</dbReference>
<dbReference type="InterPro" id="IPR011914">
    <property type="entry name" value="RfaE_dom_II"/>
</dbReference>
<dbReference type="InterPro" id="IPR029056">
    <property type="entry name" value="Ribokinase-like"/>
</dbReference>
<dbReference type="InterPro" id="IPR014729">
    <property type="entry name" value="Rossmann-like_a/b/a_fold"/>
</dbReference>
<dbReference type="NCBIfam" id="TIGR00125">
    <property type="entry name" value="cyt_tran_rel"/>
    <property type="match status" value="1"/>
</dbReference>
<dbReference type="NCBIfam" id="NF008454">
    <property type="entry name" value="PRK11316.1"/>
    <property type="match status" value="1"/>
</dbReference>
<dbReference type="NCBIfam" id="TIGR02198">
    <property type="entry name" value="rfaE_dom_I"/>
    <property type="match status" value="1"/>
</dbReference>
<dbReference type="NCBIfam" id="TIGR02199">
    <property type="entry name" value="rfaE_dom_II"/>
    <property type="match status" value="1"/>
</dbReference>
<dbReference type="PANTHER" id="PTHR46969">
    <property type="entry name" value="BIFUNCTIONAL PROTEIN HLDE"/>
    <property type="match status" value="1"/>
</dbReference>
<dbReference type="PANTHER" id="PTHR46969:SF1">
    <property type="entry name" value="BIFUNCTIONAL PROTEIN HLDE"/>
    <property type="match status" value="1"/>
</dbReference>
<dbReference type="Pfam" id="PF01467">
    <property type="entry name" value="CTP_transf_like"/>
    <property type="match status" value="1"/>
</dbReference>
<dbReference type="Pfam" id="PF00294">
    <property type="entry name" value="PfkB"/>
    <property type="match status" value="1"/>
</dbReference>
<dbReference type="SUPFAM" id="SSF52374">
    <property type="entry name" value="Nucleotidylyl transferase"/>
    <property type="match status" value="1"/>
</dbReference>
<dbReference type="SUPFAM" id="SSF53613">
    <property type="entry name" value="Ribokinase-like"/>
    <property type="match status" value="1"/>
</dbReference>
<dbReference type="PROSITE" id="PS00583">
    <property type="entry name" value="PFKB_KINASES_1"/>
    <property type="match status" value="1"/>
</dbReference>
<protein>
    <recommendedName>
        <fullName evidence="1">Bifunctional protein HldE</fullName>
    </recommendedName>
    <domain>
        <recommendedName>
            <fullName evidence="1">D-beta-D-heptose 7-phosphate kinase</fullName>
            <ecNumber evidence="1">2.7.1.167</ecNumber>
        </recommendedName>
        <alternativeName>
            <fullName evidence="1">D-beta-D-heptose 7-phosphotransferase</fullName>
        </alternativeName>
        <alternativeName>
            <fullName evidence="1">D-glycero-beta-D-manno-heptose-7-phosphate kinase</fullName>
        </alternativeName>
    </domain>
    <domain>
        <recommendedName>
            <fullName evidence="1">D-beta-D-heptose 1-phosphate adenylyltransferase</fullName>
            <ecNumber evidence="1">2.7.7.70</ecNumber>
        </recommendedName>
        <alternativeName>
            <fullName evidence="1">D-glycero-beta-D-manno-heptose 1-phosphate adenylyltransferase</fullName>
        </alternativeName>
    </domain>
</protein>
<sequence length="477" mass="51065">MKVTLPEFERAGVMVVGDVMLDRYWYGPSSRISPEAPVPVVKVNTIEERPGGAANVAMNIASLGANARLVGLTGIDDAARALSKSLADVNVKCDFVSVPTHPTITKLRVLSRNQQLIRLDFEEGFEGVDPQPLHERINQALSSIGALVLSDYAKGALASVQQMIQLARKAGVPVLIDPKGTDFERYRGATLLTPNLSEFEAVVGKCKTEEEIVERGMKLIADYELSALLVTRSEQGMSLLQPGKAPLHMPTQAQEVYDVTGAGDTVIGVLAATLAAGNSLEEACFFANAAAGVVVGKLGTSTVSPIELENAVRGRADTGFGVMTEEELKLAVVAARKRGEKVVMTNGVFDILHAGHVSYLANARKLGDRLIVAVNSDASTKRLKGDSRPVNPLEQRMIVLGALEAVDWVVSFEEDTPQRLIAGILPDLLVKGGDYKPEEIAGSKEVWANGGEVLVLNFEDGCSTTNIIKKIQQDKKG</sequence>
<comment type="function">
    <text evidence="1">Catalyzes the phosphorylation of D-glycero-D-manno-heptose 7-phosphate at the C-1 position to selectively form D-glycero-beta-D-manno-heptose-1,7-bisphosphate.</text>
</comment>
<comment type="function">
    <text evidence="1">Catalyzes the ADP transfer from ATP to D-glycero-beta-D-manno-heptose 1-phosphate, yielding ADP-D-glycero-beta-D-manno-heptose.</text>
</comment>
<comment type="catalytic activity">
    <reaction evidence="1">
        <text>D-glycero-beta-D-manno-heptose 7-phosphate + ATP = D-glycero-beta-D-manno-heptose 1,7-bisphosphate + ADP + H(+)</text>
        <dbReference type="Rhea" id="RHEA:27473"/>
        <dbReference type="ChEBI" id="CHEBI:15378"/>
        <dbReference type="ChEBI" id="CHEBI:30616"/>
        <dbReference type="ChEBI" id="CHEBI:60204"/>
        <dbReference type="ChEBI" id="CHEBI:60208"/>
        <dbReference type="ChEBI" id="CHEBI:456216"/>
        <dbReference type="EC" id="2.7.1.167"/>
    </reaction>
</comment>
<comment type="catalytic activity">
    <reaction evidence="1">
        <text>D-glycero-beta-D-manno-heptose 1-phosphate + ATP + H(+) = ADP-D-glycero-beta-D-manno-heptose + diphosphate</text>
        <dbReference type="Rhea" id="RHEA:27465"/>
        <dbReference type="ChEBI" id="CHEBI:15378"/>
        <dbReference type="ChEBI" id="CHEBI:30616"/>
        <dbReference type="ChEBI" id="CHEBI:33019"/>
        <dbReference type="ChEBI" id="CHEBI:59967"/>
        <dbReference type="ChEBI" id="CHEBI:61593"/>
        <dbReference type="EC" id="2.7.7.70"/>
    </reaction>
</comment>
<comment type="pathway">
    <text evidence="1">Nucleotide-sugar biosynthesis; ADP-L-glycero-beta-D-manno-heptose biosynthesis; ADP-L-glycero-beta-D-manno-heptose from D-glycero-beta-D-manno-heptose 7-phosphate: step 1/4.</text>
</comment>
<comment type="pathway">
    <text evidence="1">Nucleotide-sugar biosynthesis; ADP-L-glycero-beta-D-manno-heptose biosynthesis; ADP-L-glycero-beta-D-manno-heptose from D-glycero-beta-D-manno-heptose 7-phosphate: step 3/4.</text>
</comment>
<comment type="pathway">
    <text>Bacterial outer membrane biogenesis; LPS core biosynthesis.</text>
</comment>
<comment type="subunit">
    <text evidence="1">Homodimer.</text>
</comment>
<comment type="similarity">
    <text evidence="1">In the N-terminal section; belongs to the carbohydrate kinase PfkB family.</text>
</comment>
<comment type="similarity">
    <text evidence="1">In the C-terminal section; belongs to the cytidylyltransferase family.</text>
</comment>
<keyword id="KW-0007">Acetylation</keyword>
<keyword id="KW-0067">ATP-binding</keyword>
<keyword id="KW-0119">Carbohydrate metabolism</keyword>
<keyword id="KW-0418">Kinase</keyword>
<keyword id="KW-0448">Lipopolysaccharide biosynthesis</keyword>
<keyword id="KW-0511">Multifunctional enzyme</keyword>
<keyword id="KW-0547">Nucleotide-binding</keyword>
<keyword id="KW-0548">Nucleotidyltransferase</keyword>
<keyword id="KW-1185">Reference proteome</keyword>
<keyword id="KW-0808">Transferase</keyword>
<organism>
    <name type="scientific">Escherichia coli O157:H7</name>
    <dbReference type="NCBI Taxonomy" id="83334"/>
    <lineage>
        <taxon>Bacteria</taxon>
        <taxon>Pseudomonadati</taxon>
        <taxon>Pseudomonadota</taxon>
        <taxon>Gammaproteobacteria</taxon>
        <taxon>Enterobacterales</taxon>
        <taxon>Enterobacteriaceae</taxon>
        <taxon>Escherichia</taxon>
    </lineage>
</organism>
<evidence type="ECO:0000255" key="1">
    <source>
        <dbReference type="HAMAP-Rule" id="MF_01603"/>
    </source>
</evidence>
<accession>Q7AAQ7</accession>
<accession>Q8XBM4</accession>
<feature type="chain" id="PRO_0000080108" description="Bifunctional protein HldE">
    <location>
        <begin position="1"/>
        <end position="477"/>
    </location>
</feature>
<feature type="region of interest" description="Ribokinase">
    <location>
        <begin position="1"/>
        <end position="318"/>
    </location>
</feature>
<feature type="region of interest" description="Cytidylyltransferase">
    <location>
        <begin position="344"/>
        <end position="477"/>
    </location>
</feature>
<feature type="active site" evidence="1">
    <location>
        <position position="264"/>
    </location>
</feature>
<feature type="binding site" evidence="1">
    <location>
        <begin position="195"/>
        <end position="198"/>
    </location>
    <ligand>
        <name>ATP</name>
        <dbReference type="ChEBI" id="CHEBI:30616"/>
    </ligand>
</feature>
<feature type="modified residue" description="N6-acetyllysine" evidence="1">
    <location>
        <position position="179"/>
    </location>
</feature>
<gene>
    <name evidence="1" type="primary">hldE</name>
    <name type="synonym">rfaE</name>
    <name type="ordered locus">Z4405</name>
    <name type="ordered locus">ECs3935</name>
</gene>